<sequence>MTRLSLQLIAGLAGQAWLVNSDTPSHEAFASCLSDASVPIATKGTPEWTQHTTPFNTRLQYEPIAVAVPTEISQIAAAVTCAKKNSIPVTAKSGGHSFTSLGLGGEDGHLVIQLDRMYNVELAQNGTARIQSGARLGHVAVELYNQGKRALSHGYCPAVGVGGHAAHGGYGMVSRKYGLTLDWMKDATVVLHNGTIVYCSESEHSDLFWAIRGAGSSFGIVAEYGFETFPAPEKVTNFGIVLDWNPETAPAGLLAFQDFAQTMPSELSCQIDVRSTGYTLNGSYVGNEASLREALVPLLGKIGGHLEVHEGNWLEYVKFWAFGQPNIDITPPADNVHLSLYTTGALTPSLSANQFKSFADYIAKDAIKRGNSWSIQMFIHGGQNSAISGPKITDTAYAHRDKFLIFQFTDFVWPSQEYPEDGLALGREFRDIITNSFTNDQWGMYANVPDSQLSSGEAQKLYWGKNLERLETIKAKYDPSNLFRNPQSVKAAARCATHPLLLQGQCLLF</sequence>
<name>DPMAF_METAN</name>
<feature type="signal peptide" evidence="1">
    <location>
        <begin position="1"/>
        <end position="21"/>
    </location>
</feature>
<feature type="chain" id="PRO_0000451547" description="FAD-linked oxidoreductase dpmaF">
    <location>
        <begin position="22"/>
        <end position="509"/>
    </location>
</feature>
<feature type="domain" description="FAD-binding PCMH-type" evidence="3">
    <location>
        <begin position="59"/>
        <end position="231"/>
    </location>
</feature>
<feature type="glycosylation site" description="N-linked (GlcNAc...) asparagine" evidence="2">
    <location>
        <position position="125"/>
    </location>
</feature>
<feature type="glycosylation site" description="N-linked (GlcNAc...) asparagine" evidence="2">
    <location>
        <position position="193"/>
    </location>
</feature>
<feature type="glycosylation site" description="N-linked (GlcNAc...) asparagine" evidence="2">
    <location>
        <position position="281"/>
    </location>
</feature>
<proteinExistence type="evidence at protein level"/>
<gene>
    <name evidence="5" type="primary">dpmaF</name>
    <name type="ORF">MANI_006343</name>
</gene>
<evidence type="ECO:0000255" key="1"/>
<evidence type="ECO:0000255" key="2">
    <source>
        <dbReference type="PROSITE-ProRule" id="PRU00498"/>
    </source>
</evidence>
<evidence type="ECO:0000255" key="3">
    <source>
        <dbReference type="PROSITE-ProRule" id="PRU00718"/>
    </source>
</evidence>
<evidence type="ECO:0000269" key="4">
    <source>
    </source>
</evidence>
<evidence type="ECO:0000303" key="5">
    <source>
    </source>
</evidence>
<evidence type="ECO:0000305" key="6"/>
<evidence type="ECO:0000305" key="7">
    <source>
    </source>
</evidence>
<organism>
    <name type="scientific">Metarhizium anisopliae</name>
    <name type="common">Entomophthora anisopliae</name>
    <dbReference type="NCBI Taxonomy" id="5530"/>
    <lineage>
        <taxon>Eukaryota</taxon>
        <taxon>Fungi</taxon>
        <taxon>Dikarya</taxon>
        <taxon>Ascomycota</taxon>
        <taxon>Pezizomycotina</taxon>
        <taxon>Sordariomycetes</taxon>
        <taxon>Hypocreomycetidae</taxon>
        <taxon>Hypocreales</taxon>
        <taxon>Clavicipitaceae</taxon>
        <taxon>Metarhizium</taxon>
    </lineage>
</organism>
<reference key="1">
    <citation type="journal article" date="2014" name="BMC Genomics">
        <title>Comparative genome analysis of entomopathogenic fungi reveals a complex set of secreted proteins.</title>
        <authorList>
            <person name="Staats C.C."/>
            <person name="Junges A."/>
            <person name="Guedes R.L."/>
            <person name="Thompson C.E."/>
            <person name="de Morais G.L."/>
            <person name="Boldo J.T."/>
            <person name="de Almeida L.G."/>
            <person name="Andreis F.C."/>
            <person name="Gerber A.L."/>
            <person name="Sbaraini N."/>
            <person name="da Paixao R.L."/>
            <person name="Broetto L."/>
            <person name="Landell M."/>
            <person name="Santi L."/>
            <person name="Beys-da-Silva W.O."/>
            <person name="Silveira C.P."/>
            <person name="Serrano T.R."/>
            <person name="de Oliveira E.S."/>
            <person name="Kmetzsch L."/>
            <person name="Vainstein M.H."/>
            <person name="de Vasconcelos A.T."/>
            <person name="Schrank A."/>
        </authorList>
    </citation>
    <scope>NUCLEOTIDE SEQUENCE [LARGE SCALE GENOMIC DNA]</scope>
</reference>
<reference key="2">
    <citation type="journal article" date="2020" name="Nat. Commun.">
        <title>Synthetic biology based construction of biological activity-related library of fungal decalin-containing diterpenoid pyrones.</title>
        <authorList>
            <person name="Tsukada K."/>
            <person name="Shinki S."/>
            <person name="Kaneko A."/>
            <person name="Murakami K."/>
            <person name="Irie K."/>
            <person name="Murai M."/>
            <person name="Miyoshi H."/>
            <person name="Dan S."/>
            <person name="Kawaji K."/>
            <person name="Hayashi H."/>
            <person name="Kodama E.N."/>
            <person name="Hori A."/>
            <person name="Salim E."/>
            <person name="Kuraishi T."/>
            <person name="Hirata N."/>
            <person name="Kanda Y."/>
            <person name="Asai T."/>
        </authorList>
    </citation>
    <scope>FUNCTION</scope>
    <scope>CATALYTIC ACTIVITY</scope>
    <scope>PATHWAY</scope>
    <scope>BIOTECHNOLOGY</scope>
</reference>
<protein>
    <recommendedName>
        <fullName evidence="5">FAD-linked oxidoreductase dpmaF</fullName>
        <ecNumber evidence="4">1.1.1.-</ecNumber>
    </recommendedName>
    <alternativeName>
        <fullName evidence="5">Diterpenoid pyrone biosynthesis cluster protein F</fullName>
    </alternativeName>
</protein>
<keyword id="KW-0274">FAD</keyword>
<keyword id="KW-0285">Flavoprotein</keyword>
<keyword id="KW-0325">Glycoprotein</keyword>
<keyword id="KW-0560">Oxidoreductase</keyword>
<keyword id="KW-0732">Signal</keyword>
<comment type="function">
    <text evidence="4 7">FAD-linked oxidoreductase; part of the gene cluster that mediates the biosynthesis of the diterpenoid pyrones subglutinols A and B (PubMed:32286350). The first step of the pathway is the synthesis of the alpha-pyrone moiety by the polyketide synthase dpmaA via condensation of one acetyl-CoA starter unit with 3 malonyl-CoA units and 2 methylations (Probable). The alpha-pyrone is then combined with geranylgeranyl pyrophosphate (GGPP) formed by the GGPP synthase dpmaD through the action of the prenyltransferase dpmaC to yield a linear alpha-pyrone diterpenoid (Probable). Subsequent steps in the diterpenoid pyrone biosynthetic pathway involve the decalin core formation, which is initiated by the epoxidation of the C10-C11 olefin by the FAD-dependent oxidoreductase dpmaE, and is followed by a cyclization cascade catalyzed by the terpene cyclase dpmaB (Probable). The dehydrogenase dpmaF is then involved in tetrahydrofuran (THF) ring formation at the C5 unit to complete the formation of subglutinols A and B (PubMed:32286350).</text>
</comment>
<comment type="cofactor">
    <cofactor evidence="6">
        <name>FAD</name>
        <dbReference type="ChEBI" id="CHEBI:57692"/>
    </cofactor>
</comment>
<comment type="pathway">
    <text evidence="4">Secondary metabolite biosynthesis; terpenoid biosynthesis.</text>
</comment>
<comment type="biotechnology">
    <text evidence="4">Diterpenoid pyrones display various biological activities and subglutinol A shows insecticidal and anti-HIV activities.</text>
</comment>
<comment type="similarity">
    <text evidence="6">Belongs to the oxygen-dependent FAD-linked oxidoreductase family.</text>
</comment>
<dbReference type="EC" id="1.1.1.-" evidence="4"/>
<dbReference type="EMBL" id="JNNZ01000128">
    <property type="protein sequence ID" value="KFG81918.1"/>
    <property type="molecule type" value="Genomic_DNA"/>
</dbReference>
<dbReference type="SMR" id="P9WEY2"/>
<dbReference type="GlyCosmos" id="P9WEY2">
    <property type="glycosylation" value="3 sites, No reported glycans"/>
</dbReference>
<dbReference type="VEuPathDB" id="FungiDB:MAN_09808"/>
<dbReference type="OrthoDB" id="1784at5529"/>
<dbReference type="UniPathway" id="UPA00213"/>
<dbReference type="GO" id="GO:0071949">
    <property type="term" value="F:FAD binding"/>
    <property type="evidence" value="ECO:0007669"/>
    <property type="project" value="InterPro"/>
</dbReference>
<dbReference type="GO" id="GO:0016491">
    <property type="term" value="F:oxidoreductase activity"/>
    <property type="evidence" value="ECO:0007669"/>
    <property type="project" value="UniProtKB-KW"/>
</dbReference>
<dbReference type="GO" id="GO:0016114">
    <property type="term" value="P:terpenoid biosynthetic process"/>
    <property type="evidence" value="ECO:0007669"/>
    <property type="project" value="UniProtKB-UniPathway"/>
</dbReference>
<dbReference type="Gene3D" id="3.30.465.10">
    <property type="match status" value="1"/>
</dbReference>
<dbReference type="Gene3D" id="3.40.462.20">
    <property type="match status" value="1"/>
</dbReference>
<dbReference type="InterPro" id="IPR012951">
    <property type="entry name" value="BBE"/>
</dbReference>
<dbReference type="InterPro" id="IPR016166">
    <property type="entry name" value="FAD-bd_PCMH"/>
</dbReference>
<dbReference type="InterPro" id="IPR036318">
    <property type="entry name" value="FAD-bd_PCMH-like_sf"/>
</dbReference>
<dbReference type="InterPro" id="IPR016169">
    <property type="entry name" value="FAD-bd_PCMH_sub2"/>
</dbReference>
<dbReference type="InterPro" id="IPR050416">
    <property type="entry name" value="FAD-linked_Oxidoreductase"/>
</dbReference>
<dbReference type="InterPro" id="IPR006094">
    <property type="entry name" value="Oxid_FAD_bind_N"/>
</dbReference>
<dbReference type="PANTHER" id="PTHR42973">
    <property type="entry name" value="BINDING OXIDOREDUCTASE, PUTATIVE (AFU_ORTHOLOGUE AFUA_1G17690)-RELATED"/>
    <property type="match status" value="1"/>
</dbReference>
<dbReference type="PANTHER" id="PTHR42973:SF39">
    <property type="entry name" value="FAD-BINDING PCMH-TYPE DOMAIN-CONTAINING PROTEIN"/>
    <property type="match status" value="1"/>
</dbReference>
<dbReference type="Pfam" id="PF08031">
    <property type="entry name" value="BBE"/>
    <property type="match status" value="1"/>
</dbReference>
<dbReference type="Pfam" id="PF01565">
    <property type="entry name" value="FAD_binding_4"/>
    <property type="match status" value="1"/>
</dbReference>
<dbReference type="SUPFAM" id="SSF56176">
    <property type="entry name" value="FAD-binding/transporter-associated domain-like"/>
    <property type="match status" value="1"/>
</dbReference>
<dbReference type="PROSITE" id="PS51387">
    <property type="entry name" value="FAD_PCMH"/>
    <property type="match status" value="1"/>
</dbReference>
<accession>P9WEY2</accession>